<evidence type="ECO:0000255" key="1">
    <source>
        <dbReference type="HAMAP-Rule" id="MF_00296"/>
    </source>
</evidence>
<reference key="1">
    <citation type="journal article" date="2003" name="Science">
        <title>Genome of Geobacter sulfurreducens: metal reduction in subsurface environments.</title>
        <authorList>
            <person name="Methe B.A."/>
            <person name="Nelson K.E."/>
            <person name="Eisen J.A."/>
            <person name="Paulsen I.T."/>
            <person name="Nelson W.C."/>
            <person name="Heidelberg J.F."/>
            <person name="Wu D."/>
            <person name="Wu M."/>
            <person name="Ward N.L."/>
            <person name="Beanan M.J."/>
            <person name="Dodson R.J."/>
            <person name="Madupu R."/>
            <person name="Brinkac L.M."/>
            <person name="Daugherty S.C."/>
            <person name="DeBoy R.T."/>
            <person name="Durkin A.S."/>
            <person name="Gwinn M.L."/>
            <person name="Kolonay J.F."/>
            <person name="Sullivan S.A."/>
            <person name="Haft D.H."/>
            <person name="Selengut J."/>
            <person name="Davidsen T.M."/>
            <person name="Zafar N."/>
            <person name="White O."/>
            <person name="Tran B."/>
            <person name="Romero C."/>
            <person name="Forberger H.A."/>
            <person name="Weidman J.F."/>
            <person name="Khouri H.M."/>
            <person name="Feldblyum T.V."/>
            <person name="Utterback T.R."/>
            <person name="Van Aken S.E."/>
            <person name="Lovley D.R."/>
            <person name="Fraser C.M."/>
        </authorList>
    </citation>
    <scope>NUCLEOTIDE SEQUENCE [LARGE SCALE GENOMIC DNA]</scope>
    <source>
        <strain>ATCC 51573 / DSM 12127 / PCA</strain>
    </source>
</reference>
<gene>
    <name evidence="1" type="primary">metXA</name>
    <name type="ordered locus">GSU2462</name>
</gene>
<dbReference type="EC" id="2.3.1.31" evidence="1"/>
<dbReference type="EMBL" id="AE017180">
    <property type="protein sequence ID" value="AAR35835.1"/>
    <property type="molecule type" value="Genomic_DNA"/>
</dbReference>
<dbReference type="RefSeq" id="NP_953508.1">
    <property type="nucleotide sequence ID" value="NC_002939.5"/>
</dbReference>
<dbReference type="RefSeq" id="WP_010943101.1">
    <property type="nucleotide sequence ID" value="NC_002939.5"/>
</dbReference>
<dbReference type="SMR" id="Q74AC8"/>
<dbReference type="STRING" id="243231.GSU2462"/>
<dbReference type="ESTHER" id="geosl-q74ac8">
    <property type="family name" value="Homoserine_transacetylase"/>
</dbReference>
<dbReference type="EnsemblBacteria" id="AAR35835">
    <property type="protein sequence ID" value="AAR35835"/>
    <property type="gene ID" value="GSU2462"/>
</dbReference>
<dbReference type="KEGG" id="gsu:GSU2462"/>
<dbReference type="PATRIC" id="fig|243231.5.peg.2489"/>
<dbReference type="eggNOG" id="COG2021">
    <property type="taxonomic scope" value="Bacteria"/>
</dbReference>
<dbReference type="HOGENOM" id="CLU_028760_1_2_7"/>
<dbReference type="InParanoid" id="Q74AC8"/>
<dbReference type="OrthoDB" id="9800754at2"/>
<dbReference type="UniPathway" id="UPA00051">
    <property type="reaction ID" value="UER00074"/>
</dbReference>
<dbReference type="Proteomes" id="UP000000577">
    <property type="component" value="Chromosome"/>
</dbReference>
<dbReference type="GO" id="GO:0005737">
    <property type="term" value="C:cytoplasm"/>
    <property type="evidence" value="ECO:0007669"/>
    <property type="project" value="UniProtKB-SubCell"/>
</dbReference>
<dbReference type="GO" id="GO:0004414">
    <property type="term" value="F:homoserine O-acetyltransferase activity"/>
    <property type="evidence" value="ECO:0000318"/>
    <property type="project" value="GO_Central"/>
</dbReference>
<dbReference type="GO" id="GO:0009086">
    <property type="term" value="P:methionine biosynthetic process"/>
    <property type="evidence" value="ECO:0000318"/>
    <property type="project" value="GO_Central"/>
</dbReference>
<dbReference type="FunFam" id="1.10.1740.110:FF:000001">
    <property type="entry name" value="Homoserine O-acetyltransferase"/>
    <property type="match status" value="1"/>
</dbReference>
<dbReference type="Gene3D" id="1.10.1740.110">
    <property type="match status" value="1"/>
</dbReference>
<dbReference type="Gene3D" id="3.40.50.1820">
    <property type="entry name" value="alpha/beta hydrolase"/>
    <property type="match status" value="1"/>
</dbReference>
<dbReference type="HAMAP" id="MF_00296">
    <property type="entry name" value="MetX_acyltransf"/>
    <property type="match status" value="1"/>
</dbReference>
<dbReference type="InterPro" id="IPR000073">
    <property type="entry name" value="AB_hydrolase_1"/>
</dbReference>
<dbReference type="InterPro" id="IPR029058">
    <property type="entry name" value="AB_hydrolase_fold"/>
</dbReference>
<dbReference type="InterPro" id="IPR008220">
    <property type="entry name" value="HAT_MetX-like"/>
</dbReference>
<dbReference type="NCBIfam" id="TIGR01392">
    <property type="entry name" value="homoserO_Ac_trn"/>
    <property type="match status" value="1"/>
</dbReference>
<dbReference type="NCBIfam" id="NF001209">
    <property type="entry name" value="PRK00175.1"/>
    <property type="match status" value="1"/>
</dbReference>
<dbReference type="PANTHER" id="PTHR32268">
    <property type="entry name" value="HOMOSERINE O-ACETYLTRANSFERASE"/>
    <property type="match status" value="1"/>
</dbReference>
<dbReference type="PANTHER" id="PTHR32268:SF11">
    <property type="entry name" value="HOMOSERINE O-ACETYLTRANSFERASE"/>
    <property type="match status" value="1"/>
</dbReference>
<dbReference type="Pfam" id="PF00561">
    <property type="entry name" value="Abhydrolase_1"/>
    <property type="match status" value="1"/>
</dbReference>
<dbReference type="PIRSF" id="PIRSF000443">
    <property type="entry name" value="Homoser_Ac_trans"/>
    <property type="match status" value="1"/>
</dbReference>
<dbReference type="SUPFAM" id="SSF53474">
    <property type="entry name" value="alpha/beta-Hydrolases"/>
    <property type="match status" value="1"/>
</dbReference>
<sequence>MSVGIVEEQSVTFETDLRLESGRILGPITLAYETYGRLNADRSNAILVAHAWTGNAHLAGKYSEDDPKPGWWDAIVGPGRLLDTDRWFVICSNVIGSCYGSTGPASVNPKTGKRYNLSFPVITVRDMVRAQALLLDHLGIERLLTVLGGSMGGMQALEWATQFPDRVRSAIALATTSRPSPQAISLNAVARWAIFNDPSWKKGEYRKNPKDGLALARGIGHITFLSDESMWQKFGRRYSARDGLFDFFGQFEVERYLTYNGYNFVDRFDTNSFLYLAKALDLYDVAWGYESLEDAFSRVTAPIQFFAFTSDWLYPPYQTEEMATTLRALGKEAEYHLIPSAYGHDAFLLEHETFAPMVRDFLARVERG</sequence>
<organism>
    <name type="scientific">Geobacter sulfurreducens (strain ATCC 51573 / DSM 12127 / PCA)</name>
    <dbReference type="NCBI Taxonomy" id="243231"/>
    <lineage>
        <taxon>Bacteria</taxon>
        <taxon>Pseudomonadati</taxon>
        <taxon>Thermodesulfobacteriota</taxon>
        <taxon>Desulfuromonadia</taxon>
        <taxon>Geobacterales</taxon>
        <taxon>Geobacteraceae</taxon>
        <taxon>Geobacter</taxon>
    </lineage>
</organism>
<name>METXA_GEOSL</name>
<proteinExistence type="inferred from homology"/>
<protein>
    <recommendedName>
        <fullName evidence="1">Homoserine O-acetyltransferase</fullName>
        <shortName evidence="1">HAT</shortName>
        <ecNumber evidence="1">2.3.1.31</ecNumber>
    </recommendedName>
    <alternativeName>
        <fullName evidence="1">Homoserine transacetylase</fullName>
        <shortName evidence="1">HTA</shortName>
    </alternativeName>
</protein>
<feature type="chain" id="PRO_0000155718" description="Homoserine O-acetyltransferase">
    <location>
        <begin position="1"/>
        <end position="368"/>
    </location>
</feature>
<feature type="domain" description="AB hydrolase-1" evidence="1">
    <location>
        <begin position="44"/>
        <end position="350"/>
    </location>
</feature>
<feature type="active site" description="Nucleophile" evidence="1">
    <location>
        <position position="150"/>
    </location>
</feature>
<feature type="active site" evidence="1">
    <location>
        <position position="311"/>
    </location>
</feature>
<feature type="active site" evidence="1">
    <location>
        <position position="344"/>
    </location>
</feature>
<feature type="binding site" evidence="1">
    <location>
        <position position="217"/>
    </location>
    <ligand>
        <name>substrate</name>
    </ligand>
</feature>
<feature type="binding site" evidence="1">
    <location>
        <position position="345"/>
    </location>
    <ligand>
        <name>substrate</name>
    </ligand>
</feature>
<accession>Q74AC8</accession>
<comment type="function">
    <text evidence="1">Transfers an acetyl group from acetyl-CoA to L-homoserine, forming acetyl-L-homoserine.</text>
</comment>
<comment type="catalytic activity">
    <reaction evidence="1">
        <text>L-homoserine + acetyl-CoA = O-acetyl-L-homoserine + CoA</text>
        <dbReference type="Rhea" id="RHEA:13701"/>
        <dbReference type="ChEBI" id="CHEBI:57287"/>
        <dbReference type="ChEBI" id="CHEBI:57288"/>
        <dbReference type="ChEBI" id="CHEBI:57476"/>
        <dbReference type="ChEBI" id="CHEBI:57716"/>
        <dbReference type="EC" id="2.3.1.31"/>
    </reaction>
</comment>
<comment type="pathway">
    <text evidence="1">Amino-acid biosynthesis; L-methionine biosynthesis via de novo pathway; O-acetyl-L-homoserine from L-homoserine: step 1/1.</text>
</comment>
<comment type="subunit">
    <text evidence="1">Homodimer.</text>
</comment>
<comment type="subcellular location">
    <subcellularLocation>
        <location evidence="1">Cytoplasm</location>
    </subcellularLocation>
</comment>
<comment type="similarity">
    <text evidence="1">Belongs to the AB hydrolase superfamily. MetX family.</text>
</comment>
<keyword id="KW-0012">Acyltransferase</keyword>
<keyword id="KW-0028">Amino-acid biosynthesis</keyword>
<keyword id="KW-0963">Cytoplasm</keyword>
<keyword id="KW-0486">Methionine biosynthesis</keyword>
<keyword id="KW-1185">Reference proteome</keyword>
<keyword id="KW-0808">Transferase</keyword>